<dbReference type="EMBL" id="CP000020">
    <property type="protein sequence ID" value="AAW86956.1"/>
    <property type="molecule type" value="Genomic_DNA"/>
</dbReference>
<dbReference type="RefSeq" id="WP_005421395.1">
    <property type="nucleotide sequence ID" value="NZ_CAWLES010000001.1"/>
</dbReference>
<dbReference type="RefSeq" id="YP_205844.1">
    <property type="nucleotide sequence ID" value="NC_006840.2"/>
</dbReference>
<dbReference type="SMR" id="Q5E1Z0"/>
<dbReference type="STRING" id="312309.VF_2461"/>
<dbReference type="EnsemblBacteria" id="AAW86956">
    <property type="protein sequence ID" value="AAW86956"/>
    <property type="gene ID" value="VF_2461"/>
</dbReference>
<dbReference type="GeneID" id="54165191"/>
<dbReference type="KEGG" id="vfi:VF_2461"/>
<dbReference type="PATRIC" id="fig|312309.11.peg.2488"/>
<dbReference type="eggNOG" id="COG0316">
    <property type="taxonomic scope" value="Bacteria"/>
</dbReference>
<dbReference type="eggNOG" id="COG0694">
    <property type="taxonomic scope" value="Bacteria"/>
</dbReference>
<dbReference type="HOGENOM" id="CLU_094569_0_0_6"/>
<dbReference type="OrthoDB" id="9785450at2"/>
<dbReference type="Proteomes" id="UP000000537">
    <property type="component" value="Chromosome I"/>
</dbReference>
<dbReference type="GO" id="GO:0051539">
    <property type="term" value="F:4 iron, 4 sulfur cluster binding"/>
    <property type="evidence" value="ECO:0007669"/>
    <property type="project" value="UniProtKB-UniRule"/>
</dbReference>
<dbReference type="GO" id="GO:0005506">
    <property type="term" value="F:iron ion binding"/>
    <property type="evidence" value="ECO:0007669"/>
    <property type="project" value="InterPro"/>
</dbReference>
<dbReference type="GO" id="GO:0016226">
    <property type="term" value="P:iron-sulfur cluster assembly"/>
    <property type="evidence" value="ECO:0007669"/>
    <property type="project" value="UniProtKB-UniRule"/>
</dbReference>
<dbReference type="GO" id="GO:0051604">
    <property type="term" value="P:protein maturation"/>
    <property type="evidence" value="ECO:0007669"/>
    <property type="project" value="UniProtKB-UniRule"/>
</dbReference>
<dbReference type="Gene3D" id="3.30.300.130">
    <property type="entry name" value="Fe-S cluster assembly (FSCA)"/>
    <property type="match status" value="1"/>
</dbReference>
<dbReference type="Gene3D" id="2.60.300.12">
    <property type="entry name" value="HesB-like domain"/>
    <property type="match status" value="1"/>
</dbReference>
<dbReference type="HAMAP" id="MF_01637">
    <property type="entry name" value="Fe_S_biogen_NfuA"/>
    <property type="match status" value="1"/>
</dbReference>
<dbReference type="InterPro" id="IPR017726">
    <property type="entry name" value="Fe/S_biogenesis_protein_NfuA"/>
</dbReference>
<dbReference type="InterPro" id="IPR000361">
    <property type="entry name" value="FeS_biogenesis"/>
</dbReference>
<dbReference type="InterPro" id="IPR034904">
    <property type="entry name" value="FSCA_dom_sf"/>
</dbReference>
<dbReference type="InterPro" id="IPR035903">
    <property type="entry name" value="HesB-like_dom_sf"/>
</dbReference>
<dbReference type="InterPro" id="IPR001075">
    <property type="entry name" value="NIF_FeS_clus_asmbl_NifU_C"/>
</dbReference>
<dbReference type="NCBIfam" id="NF008392">
    <property type="entry name" value="PRK11190.1"/>
    <property type="match status" value="1"/>
</dbReference>
<dbReference type="NCBIfam" id="TIGR03341">
    <property type="entry name" value="YhgI_GntY"/>
    <property type="match status" value="1"/>
</dbReference>
<dbReference type="PANTHER" id="PTHR11178:SF51">
    <property type="entry name" value="FE_S BIOGENESIS PROTEIN NFUA"/>
    <property type="match status" value="1"/>
</dbReference>
<dbReference type="PANTHER" id="PTHR11178">
    <property type="entry name" value="IRON-SULFUR CLUSTER SCAFFOLD PROTEIN NFU-RELATED"/>
    <property type="match status" value="1"/>
</dbReference>
<dbReference type="Pfam" id="PF01521">
    <property type="entry name" value="Fe-S_biosyn"/>
    <property type="match status" value="1"/>
</dbReference>
<dbReference type="Pfam" id="PF01106">
    <property type="entry name" value="NifU"/>
    <property type="match status" value="1"/>
</dbReference>
<dbReference type="SUPFAM" id="SSF117916">
    <property type="entry name" value="Fe-S cluster assembly (FSCA) domain-like"/>
    <property type="match status" value="1"/>
</dbReference>
<dbReference type="SUPFAM" id="SSF89360">
    <property type="entry name" value="HesB-like domain"/>
    <property type="match status" value="1"/>
</dbReference>
<sequence length="194" mass="21255">MSSINITESAQEHFAKLLAQQPEGTNIRVFVVNPGTQNAECGVSYCPPEAVEANDTELKFEKLSAYVDELSLPFLEDADIDYVTDKMGSQLTLKAPNAKMRKVADDAPLFERVEYAIQTQVNPQLAGHGGHVSLMEINDEGVAIVQFGGGCNGCSMVDVTLKEGIEKELLVQFEGELTAVKDLTEHDRGEHSYY</sequence>
<feature type="chain" id="PRO_0000268247" description="Fe/S biogenesis protein NfuA">
    <location>
        <begin position="1"/>
        <end position="194"/>
    </location>
</feature>
<feature type="binding site" evidence="1">
    <location>
        <position position="151"/>
    </location>
    <ligand>
        <name>[4Fe-4S] cluster</name>
        <dbReference type="ChEBI" id="CHEBI:49883"/>
    </ligand>
</feature>
<feature type="binding site" evidence="1">
    <location>
        <position position="154"/>
    </location>
    <ligand>
        <name>[4Fe-4S] cluster</name>
        <dbReference type="ChEBI" id="CHEBI:49883"/>
    </ligand>
</feature>
<name>NFUA_ALIF1</name>
<protein>
    <recommendedName>
        <fullName evidence="1">Fe/S biogenesis protein NfuA</fullName>
    </recommendedName>
</protein>
<organism>
    <name type="scientific">Aliivibrio fischeri (strain ATCC 700601 / ES114)</name>
    <name type="common">Vibrio fischeri</name>
    <dbReference type="NCBI Taxonomy" id="312309"/>
    <lineage>
        <taxon>Bacteria</taxon>
        <taxon>Pseudomonadati</taxon>
        <taxon>Pseudomonadota</taxon>
        <taxon>Gammaproteobacteria</taxon>
        <taxon>Vibrionales</taxon>
        <taxon>Vibrionaceae</taxon>
        <taxon>Aliivibrio</taxon>
    </lineage>
</organism>
<proteinExistence type="inferred from homology"/>
<keyword id="KW-0004">4Fe-4S</keyword>
<keyword id="KW-0408">Iron</keyword>
<keyword id="KW-0411">Iron-sulfur</keyword>
<keyword id="KW-0479">Metal-binding</keyword>
<keyword id="KW-1185">Reference proteome</keyword>
<evidence type="ECO:0000255" key="1">
    <source>
        <dbReference type="HAMAP-Rule" id="MF_01637"/>
    </source>
</evidence>
<accession>Q5E1Z0</accession>
<gene>
    <name evidence="1" type="primary">nfuA</name>
    <name type="ordered locus">VF_2461</name>
</gene>
<reference key="1">
    <citation type="journal article" date="2005" name="Proc. Natl. Acad. Sci. U.S.A.">
        <title>Complete genome sequence of Vibrio fischeri: a symbiotic bacterium with pathogenic congeners.</title>
        <authorList>
            <person name="Ruby E.G."/>
            <person name="Urbanowski M."/>
            <person name="Campbell J."/>
            <person name="Dunn A."/>
            <person name="Faini M."/>
            <person name="Gunsalus R."/>
            <person name="Lostroh P."/>
            <person name="Lupp C."/>
            <person name="McCann J."/>
            <person name="Millikan D."/>
            <person name="Schaefer A."/>
            <person name="Stabb E."/>
            <person name="Stevens A."/>
            <person name="Visick K."/>
            <person name="Whistler C."/>
            <person name="Greenberg E.P."/>
        </authorList>
    </citation>
    <scope>NUCLEOTIDE SEQUENCE [LARGE SCALE GENOMIC DNA]</scope>
    <source>
        <strain>ATCC 700601 / ES114</strain>
    </source>
</reference>
<comment type="function">
    <text evidence="1">Involved in iron-sulfur cluster biogenesis. Binds a 4Fe-4S cluster, can transfer this cluster to apoproteins, and thereby intervenes in the maturation of Fe/S proteins. Could also act as a scaffold/chaperone for damaged Fe/S proteins.</text>
</comment>
<comment type="cofactor">
    <cofactor evidence="1">
        <name>[4Fe-4S] cluster</name>
        <dbReference type="ChEBI" id="CHEBI:49883"/>
    </cofactor>
    <text evidence="1">Binds 1 [4Fe-4S] cluster per subunit. The cluster is presumably bound at the interface of two monomers.</text>
</comment>
<comment type="subunit">
    <text evidence="1">Homodimer.</text>
</comment>
<comment type="similarity">
    <text evidence="1">Belongs to the NfuA family.</text>
</comment>